<reference key="1">
    <citation type="submission" date="2005-10" db="EMBL/GenBank/DDBJ databases">
        <authorList>
            <consortium name="NIH - Mammalian Gene Collection (MGC) project"/>
        </authorList>
    </citation>
    <scope>NUCLEOTIDE SEQUENCE [LARGE SCALE MRNA]</scope>
    <source>
        <strain>Hereford</strain>
        <tissue>Fetal liver</tissue>
    </source>
</reference>
<protein>
    <recommendedName>
        <fullName>Protein NEDD1</fullName>
    </recommendedName>
    <alternativeName>
        <fullName>Neural precursor cell expressed developmentally down-regulated protein 1</fullName>
        <shortName>NEDD-1</shortName>
    </alternativeName>
</protein>
<dbReference type="EMBL" id="BC107541">
    <property type="protein sequence ID" value="AAI07542.1"/>
    <property type="molecule type" value="mRNA"/>
</dbReference>
<dbReference type="RefSeq" id="NP_001030410.1">
    <property type="nucleotide sequence ID" value="NM_001035333.2"/>
</dbReference>
<dbReference type="RefSeq" id="XP_024847530.1">
    <property type="nucleotide sequence ID" value="XM_024991762.2"/>
</dbReference>
<dbReference type="SMR" id="Q3B7M6"/>
<dbReference type="FunCoup" id="Q3B7M6">
    <property type="interactions" value="2303"/>
</dbReference>
<dbReference type="STRING" id="9913.ENSBTAP00000002464"/>
<dbReference type="PaxDb" id="9913-ENSBTAP00000002464"/>
<dbReference type="Ensembl" id="ENSBTAT00000002464.7">
    <property type="protein sequence ID" value="ENSBTAP00000002464.5"/>
    <property type="gene ID" value="ENSBTAG00000001894.7"/>
</dbReference>
<dbReference type="GeneID" id="519463"/>
<dbReference type="KEGG" id="bta:519463"/>
<dbReference type="CTD" id="121441"/>
<dbReference type="VEuPathDB" id="HostDB:ENSBTAG00000001894"/>
<dbReference type="VGNC" id="VGNC:31982">
    <property type="gene designation" value="NEDD1"/>
</dbReference>
<dbReference type="eggNOG" id="KOG4378">
    <property type="taxonomic scope" value="Eukaryota"/>
</dbReference>
<dbReference type="GeneTree" id="ENSGT00390000001561"/>
<dbReference type="HOGENOM" id="CLU_415014_0_0_1"/>
<dbReference type="InParanoid" id="Q3B7M6"/>
<dbReference type="OMA" id="GTMVLWD"/>
<dbReference type="OrthoDB" id="1602884at2759"/>
<dbReference type="TreeFam" id="TF329816"/>
<dbReference type="Reactome" id="R-BTA-2565942">
    <property type="pathway name" value="Regulation of PLK1 Activity at G2/M Transition"/>
</dbReference>
<dbReference type="Reactome" id="R-BTA-380259">
    <property type="pathway name" value="Loss of Nlp from mitotic centrosomes"/>
</dbReference>
<dbReference type="Reactome" id="R-BTA-380270">
    <property type="pathway name" value="Recruitment of mitotic centrosome proteins and complexes"/>
</dbReference>
<dbReference type="Reactome" id="R-BTA-380284">
    <property type="pathway name" value="Loss of proteins required for interphase microtubule organization from the centrosome"/>
</dbReference>
<dbReference type="Reactome" id="R-BTA-380320">
    <property type="pathway name" value="Recruitment of NuMA to mitotic centrosomes"/>
</dbReference>
<dbReference type="Reactome" id="R-BTA-5620912">
    <property type="pathway name" value="Anchoring of the basal body to the plasma membrane"/>
</dbReference>
<dbReference type="Reactome" id="R-BTA-8854518">
    <property type="pathway name" value="AURKA Activation by TPX2"/>
</dbReference>
<dbReference type="Proteomes" id="UP000009136">
    <property type="component" value="Chromosome 5"/>
</dbReference>
<dbReference type="Bgee" id="ENSBTAG00000001894">
    <property type="expression patterns" value="Expressed in oocyte and 107 other cell types or tissues"/>
</dbReference>
<dbReference type="GO" id="GO:0045177">
    <property type="term" value="C:apical part of cell"/>
    <property type="evidence" value="ECO:0007669"/>
    <property type="project" value="Ensembl"/>
</dbReference>
<dbReference type="GO" id="GO:0005814">
    <property type="term" value="C:centriole"/>
    <property type="evidence" value="ECO:0000318"/>
    <property type="project" value="GO_Central"/>
</dbReference>
<dbReference type="GO" id="GO:0005813">
    <property type="term" value="C:centrosome"/>
    <property type="evidence" value="ECO:0000318"/>
    <property type="project" value="GO_Central"/>
</dbReference>
<dbReference type="GO" id="GO:0036064">
    <property type="term" value="C:ciliary basal body"/>
    <property type="evidence" value="ECO:0000318"/>
    <property type="project" value="GO_Central"/>
</dbReference>
<dbReference type="GO" id="GO:0005737">
    <property type="term" value="C:cytoplasm"/>
    <property type="evidence" value="ECO:0000318"/>
    <property type="project" value="GO_Central"/>
</dbReference>
<dbReference type="GO" id="GO:0005829">
    <property type="term" value="C:cytosol"/>
    <property type="evidence" value="ECO:0007669"/>
    <property type="project" value="Ensembl"/>
</dbReference>
<dbReference type="GO" id="GO:0001650">
    <property type="term" value="C:fibrillar center"/>
    <property type="evidence" value="ECO:0007669"/>
    <property type="project" value="Ensembl"/>
</dbReference>
<dbReference type="GO" id="GO:0005654">
    <property type="term" value="C:nucleoplasm"/>
    <property type="evidence" value="ECO:0007669"/>
    <property type="project" value="Ensembl"/>
</dbReference>
<dbReference type="GO" id="GO:0000242">
    <property type="term" value="C:pericentriolar material"/>
    <property type="evidence" value="ECO:0007669"/>
    <property type="project" value="Ensembl"/>
</dbReference>
<dbReference type="GO" id="GO:0000922">
    <property type="term" value="C:spindle pole"/>
    <property type="evidence" value="ECO:0000318"/>
    <property type="project" value="GO_Central"/>
</dbReference>
<dbReference type="GO" id="GO:0043015">
    <property type="term" value="F:gamma-tubulin binding"/>
    <property type="evidence" value="ECO:0000318"/>
    <property type="project" value="GO_Central"/>
</dbReference>
<dbReference type="GO" id="GO:0051301">
    <property type="term" value="P:cell division"/>
    <property type="evidence" value="ECO:0007669"/>
    <property type="project" value="UniProtKB-KW"/>
</dbReference>
<dbReference type="GO" id="GO:0007020">
    <property type="term" value="P:microtubule nucleation"/>
    <property type="evidence" value="ECO:0000318"/>
    <property type="project" value="GO_Central"/>
</dbReference>
<dbReference type="GO" id="GO:0000278">
    <property type="term" value="P:mitotic cell cycle"/>
    <property type="evidence" value="ECO:0000318"/>
    <property type="project" value="GO_Central"/>
</dbReference>
<dbReference type="CDD" id="cd00200">
    <property type="entry name" value="WD40"/>
    <property type="match status" value="1"/>
</dbReference>
<dbReference type="FunFam" id="2.130.10.10:FF:000284">
    <property type="entry name" value="protein NEDD1 isoform X1"/>
    <property type="match status" value="1"/>
</dbReference>
<dbReference type="FunFam" id="2.130.10.10:FF:000302">
    <property type="entry name" value="protein NEDD1 isoform X2"/>
    <property type="match status" value="1"/>
</dbReference>
<dbReference type="Gene3D" id="2.130.10.10">
    <property type="entry name" value="YVTN repeat-like/Quinoprotein amine dehydrogenase"/>
    <property type="match status" value="2"/>
</dbReference>
<dbReference type="InterPro" id="IPR052818">
    <property type="entry name" value="NEDD1_Spindle_Assembly"/>
</dbReference>
<dbReference type="InterPro" id="IPR015943">
    <property type="entry name" value="WD40/YVTN_repeat-like_dom_sf"/>
</dbReference>
<dbReference type="InterPro" id="IPR019775">
    <property type="entry name" value="WD40_repeat_CS"/>
</dbReference>
<dbReference type="InterPro" id="IPR036322">
    <property type="entry name" value="WD40_repeat_dom_sf"/>
</dbReference>
<dbReference type="InterPro" id="IPR001680">
    <property type="entry name" value="WD40_rpt"/>
</dbReference>
<dbReference type="PANTHER" id="PTHR44414">
    <property type="entry name" value="PROTEIN NEDD1"/>
    <property type="match status" value="1"/>
</dbReference>
<dbReference type="PANTHER" id="PTHR44414:SF1">
    <property type="entry name" value="PROTEIN NEDD1"/>
    <property type="match status" value="1"/>
</dbReference>
<dbReference type="Pfam" id="PF00400">
    <property type="entry name" value="WD40"/>
    <property type="match status" value="3"/>
</dbReference>
<dbReference type="SMART" id="SM00320">
    <property type="entry name" value="WD40"/>
    <property type="match status" value="6"/>
</dbReference>
<dbReference type="SUPFAM" id="SSF50978">
    <property type="entry name" value="WD40 repeat-like"/>
    <property type="match status" value="1"/>
</dbReference>
<dbReference type="PROSITE" id="PS00678">
    <property type="entry name" value="WD_REPEATS_1"/>
    <property type="match status" value="2"/>
</dbReference>
<dbReference type="PROSITE" id="PS50082">
    <property type="entry name" value="WD_REPEATS_2"/>
    <property type="match status" value="1"/>
</dbReference>
<dbReference type="PROSITE" id="PS50294">
    <property type="entry name" value="WD_REPEATS_REGION"/>
    <property type="match status" value="1"/>
</dbReference>
<proteinExistence type="evidence at transcript level"/>
<sequence>MQENLRFASSGDDVKIWDASSMTLVDKFNPHTAPHAISSVCWSSNNNFLVTASSSGDKIVVSSCKCKPVPLLELGEGQKQTCVSLNSTSMYLVSGGLNNTVNIWDLKSKRVHRSLKDHKDEVTCVTYNWNDCYIASGSLSGEIILHSVTTNLSSTPFGHGSNQSIRHLKYSLFKKSLLGSVSDNGIVTLWDVNSQSPYHNFDSTHKAPASGICFSPVNELLFVTVGLDKRIILYDTSSKKLVKTLVADAPLTAVDFMPDGATLAIGSSRGKIYQYDLRMLKSPIKTISAHKTSVQCIAFQYSTVLSKSGLNKGCSNKPTAVNKRTANVSAGGGGAQNPGVVREAATTSIATVPPQPTAAAVGKGAVAPQDKAGLPRSINTDTLSKEAESGKNQDFSNFDDSGKSSLGDMFSPVRDDAVVSKGGDESIGKGDGLDFLPQLNSVFPPRKNPVVSSTSVLHSSPLNVFMGSPGKEENENHDLTAESKKMYLGKQESKDSFKQFAKLISGAETGNLNASPSSNQTRSPEKFEKPEKEIEAQLINEPPGNGSSTPNPKIASSVTAGVAGSLSEKIVDTIGNSRPNAPLSSVQIRFIQNMIQETLDDFREACHRDIVNLQVEMIKQFHMQLNEMHSLLERYSVNEGLVAEIERLREENKRLRAHF</sequence>
<name>NEDD1_BOVIN</name>
<comment type="function">
    <text evidence="1">Required for mitosis progression. Promotes the nucleation of microtubules from the spindle.</text>
</comment>
<comment type="subunit">
    <text evidence="1">Interacts with FAM29A. Interacts with HSPA1A and HSPA1B. Interacts with gamma-tubulin in a HSPA1A/B-dependent manner.</text>
</comment>
<comment type="subcellular location">
    <subcellularLocation>
        <location evidence="1">Cytoplasm</location>
        <location evidence="1">Cytoskeleton</location>
        <location evidence="1">Microtubule organizing center</location>
        <location evidence="1">Centrosome</location>
    </subcellularLocation>
</comment>
<comment type="PTM">
    <text evidence="1">During mitosis, prior phosphorylation on Thr-549 by CDK1 promotes subsequent phosphorylation by PLK1 on Thr-382, Ser-426 and Ser-636. Phosphorylated NEDD1 can interact with gamma-tubulin for targeting the gamma-tubulin ring complex (gTuRC) to the centrosome, an important step for spindle formation.</text>
</comment>
<keyword id="KW-0131">Cell cycle</keyword>
<keyword id="KW-0132">Cell division</keyword>
<keyword id="KW-0963">Cytoplasm</keyword>
<keyword id="KW-0206">Cytoskeleton</keyword>
<keyword id="KW-0498">Mitosis</keyword>
<keyword id="KW-0597">Phosphoprotein</keyword>
<keyword id="KW-1185">Reference proteome</keyword>
<keyword id="KW-0677">Repeat</keyword>
<keyword id="KW-0853">WD repeat</keyword>
<evidence type="ECO:0000250" key="1">
    <source>
        <dbReference type="UniProtKB" id="Q8NHV4"/>
    </source>
</evidence>
<evidence type="ECO:0000256" key="2">
    <source>
        <dbReference type="SAM" id="MobiDB-lite"/>
    </source>
</evidence>
<gene>
    <name type="primary">NEDD1</name>
</gene>
<organism>
    <name type="scientific">Bos taurus</name>
    <name type="common">Bovine</name>
    <dbReference type="NCBI Taxonomy" id="9913"/>
    <lineage>
        <taxon>Eukaryota</taxon>
        <taxon>Metazoa</taxon>
        <taxon>Chordata</taxon>
        <taxon>Craniata</taxon>
        <taxon>Vertebrata</taxon>
        <taxon>Euteleostomi</taxon>
        <taxon>Mammalia</taxon>
        <taxon>Eutheria</taxon>
        <taxon>Laurasiatheria</taxon>
        <taxon>Artiodactyla</taxon>
        <taxon>Ruminantia</taxon>
        <taxon>Pecora</taxon>
        <taxon>Bovidae</taxon>
        <taxon>Bovinae</taxon>
        <taxon>Bos</taxon>
    </lineage>
</organism>
<accession>Q3B7M6</accession>
<feature type="chain" id="PRO_0000246163" description="Protein NEDD1">
    <location>
        <begin position="1"/>
        <end position="659"/>
    </location>
</feature>
<feature type="repeat" description="WD 1">
    <location>
        <begin position="1"/>
        <end position="31"/>
    </location>
</feature>
<feature type="repeat" description="WD 2">
    <location>
        <begin position="32"/>
        <end position="71"/>
    </location>
</feature>
<feature type="repeat" description="WD 3">
    <location>
        <begin position="75"/>
        <end position="114"/>
    </location>
</feature>
<feature type="repeat" description="WD 4">
    <location>
        <begin position="117"/>
        <end position="156"/>
    </location>
</feature>
<feature type="repeat" description="WD 5">
    <location>
        <begin position="160"/>
        <end position="200"/>
    </location>
</feature>
<feature type="repeat" description="WD 6">
    <location>
        <begin position="204"/>
        <end position="244"/>
    </location>
</feature>
<feature type="repeat" description="WD 7">
    <location>
        <begin position="246"/>
        <end position="285"/>
    </location>
</feature>
<feature type="repeat" description="WD 8">
    <location>
        <begin position="289"/>
        <end position="332"/>
    </location>
</feature>
<feature type="region of interest" description="Disordered" evidence="2">
    <location>
        <begin position="383"/>
        <end position="433"/>
    </location>
</feature>
<feature type="region of interest" description="Disordered" evidence="2">
    <location>
        <begin position="508"/>
        <end position="531"/>
    </location>
</feature>
<feature type="compositionally biased region" description="Basic and acidic residues" evidence="2">
    <location>
        <begin position="413"/>
        <end position="432"/>
    </location>
</feature>
<feature type="compositionally biased region" description="Polar residues" evidence="2">
    <location>
        <begin position="508"/>
        <end position="522"/>
    </location>
</feature>
<feature type="modified residue" description="Phosphothreonine; by PLK1" evidence="1">
    <location>
        <position position="382"/>
    </location>
</feature>
<feature type="modified residue" description="Phosphoserine" evidence="1">
    <location>
        <position position="411"/>
    </location>
</feature>
<feature type="modified residue" description="Phosphoserine; by PLK1" evidence="1">
    <location>
        <position position="426"/>
    </location>
</feature>
<feature type="modified residue" description="Phosphoserine" evidence="1">
    <location>
        <position position="468"/>
    </location>
</feature>
<feature type="modified residue" description="Phosphoserine" evidence="1">
    <location>
        <position position="515"/>
    </location>
</feature>
<feature type="modified residue" description="Phosphothreonine; by CDK1" evidence="1">
    <location>
        <position position="549"/>
    </location>
</feature>
<feature type="modified residue" description="Phosphoserine; by PLK1" evidence="1">
    <location>
        <position position="636"/>
    </location>
</feature>